<dbReference type="EMBL" id="Y13269">
    <property type="protein sequence ID" value="CAA73718.1"/>
    <property type="molecule type" value="mRNA"/>
</dbReference>
<dbReference type="SMR" id="O18495"/>
<dbReference type="TCDB" id="1.C.17.2.1">
    <property type="family name" value="the cecropin (cecropin) family"/>
</dbReference>
<dbReference type="GO" id="GO:0005576">
    <property type="term" value="C:extracellular region"/>
    <property type="evidence" value="ECO:0007669"/>
    <property type="project" value="UniProtKB-SubCell"/>
</dbReference>
<dbReference type="GO" id="GO:0042742">
    <property type="term" value="P:defense response to bacterium"/>
    <property type="evidence" value="ECO:0007669"/>
    <property type="project" value="UniProtKB-KW"/>
</dbReference>
<dbReference type="InterPro" id="IPR035578">
    <property type="entry name" value="Styelin"/>
</dbReference>
<dbReference type="Pfam" id="PF17562">
    <property type="entry name" value="Styelin"/>
    <property type="match status" value="1"/>
</dbReference>
<keyword id="KW-0027">Amidation</keyword>
<keyword id="KW-0044">Antibiotic</keyword>
<keyword id="KW-0929">Antimicrobial</keyword>
<keyword id="KW-0102">Bromination</keyword>
<keyword id="KW-0903">Direct protein sequencing</keyword>
<keyword id="KW-0379">Hydroxylation</keyword>
<keyword id="KW-0964">Secreted</keyword>
<keyword id="KW-0732">Signal</keyword>
<comment type="function">
    <text>Bactericidal against several Gram-positive and Gram-negative bacteria. Plays a significant role in the innate immune mechanisms of S.clava.</text>
</comment>
<comment type="subcellular location">
    <subcellularLocation>
        <location>Secreted</location>
    </subcellularLocation>
</comment>
<comment type="tissue specificity">
    <text>Hemocytes and pharyngeal tissues.</text>
</comment>
<comment type="PTM">
    <text>Contains L-DOPA (3',4'-dihydroxyphenylalanine).</text>
</comment>
<reference key="1">
    <citation type="journal article" date="1997" name="FEBS Lett.">
        <title>cDNA cloning of three cecropin-like antimicrobial peptides (Styelins) from the tunicate, Styela clava.</title>
        <authorList>
            <person name="Zhao C."/>
            <person name="Liaw L."/>
            <person name="Lee I.H."/>
            <person name="Lehrer R.I."/>
        </authorList>
    </citation>
    <scope>NUCLEOTIDE SEQUENCE [MRNA]</scope>
    <source>
        <tissue>Pharynx</tissue>
    </source>
</reference>
<reference key="2">
    <citation type="journal article" date="2000" name="J. Biol. Chem.">
        <title>Styelin D, an extensively modified antimicrobial peptide from ascidian hemocytes.</title>
        <authorList>
            <person name="Taylor S.W."/>
            <person name="Craig A.G."/>
            <person name="Fischer W.H."/>
            <person name="Park M."/>
            <person name="Lehrer R.I."/>
        </authorList>
    </citation>
    <scope>PROTEIN SEQUENCE OF 55-81</scope>
    <scope>BROMINATION AT TRP-24</scope>
    <scope>HYDROXYLATION AT ARG-26; LYS-27; LYS-30; LYS-34; TYR-36; TYR-37; LYS-38; LYS-40; TYR-41; TYR-42 AND LYS-44</scope>
    <scope>AMIDATION AT LEU-54</scope>
    <scope>ANTIBACTERIAL ACTIVITY</scope>
    <source>
        <tissue>Hemocyte</tissue>
    </source>
</reference>
<feature type="signal peptide" evidence="1">
    <location>
        <begin position="1"/>
        <end position="22"/>
    </location>
</feature>
<feature type="peptide" id="PRO_0000022436" description="Styelin-D" evidence="2">
    <location>
        <begin position="23"/>
        <end position="54"/>
    </location>
</feature>
<feature type="propeptide" id="PRO_0000022437" description="Removed in mature form">
    <location>
        <begin position="56"/>
        <end position="81"/>
    </location>
</feature>
<feature type="modified residue" description="6'-bromotryptophan" evidence="2">
    <location>
        <position position="24"/>
    </location>
</feature>
<feature type="modified residue" description="3,4-dihydroxyarginine" evidence="2">
    <location>
        <position position="26"/>
    </location>
</feature>
<feature type="modified residue" description="4,5-dihydroxylysine" evidence="2">
    <location>
        <position position="27"/>
    </location>
</feature>
<feature type="modified residue" description="4,5-dihydroxylysine" evidence="2">
    <location>
        <position position="30"/>
    </location>
</feature>
<feature type="modified residue" description="4,5-dihydroxylysine" evidence="2">
    <location>
        <position position="34"/>
    </location>
</feature>
<feature type="modified residue" description="3',4'-dihydroxyphenylalanine" evidence="2">
    <location>
        <position position="36"/>
    </location>
</feature>
<feature type="modified residue" description="3',4'-dihydroxyphenylalanine" evidence="2">
    <location>
        <position position="37"/>
    </location>
</feature>
<feature type="modified residue" description="4,5-dihydroxylysine" evidence="2">
    <location>
        <position position="38"/>
    </location>
</feature>
<feature type="modified residue" description="5-hydroxylysine" evidence="2">
    <location>
        <position position="40"/>
    </location>
</feature>
<feature type="modified residue" description="3',4'-dihydroxyphenylalanine" evidence="2">
    <location>
        <position position="41"/>
    </location>
</feature>
<feature type="modified residue" description="3',4'-dihydroxyphenylalanine" evidence="2">
    <location>
        <position position="42"/>
    </location>
</feature>
<feature type="modified residue" description="5-hydroxylysine" evidence="2">
    <location>
        <position position="44"/>
    </location>
</feature>
<feature type="modified residue" description="Leucine amide" evidence="2">
    <location>
        <position position="54"/>
    </location>
</feature>
<accession>O18495</accession>
<sequence length="81" mass="9560">MQMKATILIVLVALFMIQQSEAGWLRKAAKSVGKFYYKHKYYIKAAWQIGKHALGDMTDEEFQDFMKEVEQAREEELQSRQ</sequence>
<proteinExistence type="evidence at protein level"/>
<organism>
    <name type="scientific">Styela clava</name>
    <name type="common">Sea squirt</name>
    <dbReference type="NCBI Taxonomy" id="7725"/>
    <lineage>
        <taxon>Eukaryota</taxon>
        <taxon>Metazoa</taxon>
        <taxon>Chordata</taxon>
        <taxon>Tunicata</taxon>
        <taxon>Ascidiacea</taxon>
        <taxon>Stolidobranchia</taxon>
        <taxon>Styelidae</taxon>
        <taxon>Styela</taxon>
    </lineage>
</organism>
<name>STYD_STYCL</name>
<protein>
    <recommendedName>
        <fullName>Styelin-D</fullName>
    </recommendedName>
</protein>
<evidence type="ECO:0000255" key="1"/>
<evidence type="ECO:0000269" key="2">
    <source>
    </source>
</evidence>